<dbReference type="EC" id="2.7.2.2" evidence="1"/>
<dbReference type="EMBL" id="AE014075">
    <property type="protein sequence ID" value="AAN79112.1"/>
    <property type="molecule type" value="Genomic_DNA"/>
</dbReference>
<dbReference type="RefSeq" id="WP_000855367.1">
    <property type="nucleotide sequence ID" value="NZ_CP051263.1"/>
</dbReference>
<dbReference type="SMR" id="Q8FK51"/>
<dbReference type="STRING" id="199310.c0635"/>
<dbReference type="KEGG" id="ecc:c0635"/>
<dbReference type="eggNOG" id="COG0549">
    <property type="taxonomic scope" value="Bacteria"/>
</dbReference>
<dbReference type="HOGENOM" id="CLU_076278_0_1_6"/>
<dbReference type="BioCyc" id="ECOL199310:C0635-MONOMER"/>
<dbReference type="UniPathway" id="UPA00395"/>
<dbReference type="Proteomes" id="UP000001410">
    <property type="component" value="Chromosome"/>
</dbReference>
<dbReference type="GO" id="GO:0005829">
    <property type="term" value="C:cytosol"/>
    <property type="evidence" value="ECO:0007669"/>
    <property type="project" value="TreeGrafter"/>
</dbReference>
<dbReference type="GO" id="GO:0005524">
    <property type="term" value="F:ATP binding"/>
    <property type="evidence" value="ECO:0007669"/>
    <property type="project" value="UniProtKB-KW"/>
</dbReference>
<dbReference type="GO" id="GO:0008804">
    <property type="term" value="F:carbamate kinase activity"/>
    <property type="evidence" value="ECO:0007669"/>
    <property type="project" value="UniProtKB-EC"/>
</dbReference>
<dbReference type="GO" id="GO:0019546">
    <property type="term" value="P:arginine deiminase pathway"/>
    <property type="evidence" value="ECO:0007669"/>
    <property type="project" value="TreeGrafter"/>
</dbReference>
<dbReference type="CDD" id="cd04235">
    <property type="entry name" value="AAK_CK"/>
    <property type="match status" value="1"/>
</dbReference>
<dbReference type="FunFam" id="3.40.1160.10:FF:000007">
    <property type="entry name" value="Carbamate kinase"/>
    <property type="match status" value="1"/>
</dbReference>
<dbReference type="Gene3D" id="3.40.1160.10">
    <property type="entry name" value="Acetylglutamate kinase-like"/>
    <property type="match status" value="1"/>
</dbReference>
<dbReference type="InterPro" id="IPR036393">
    <property type="entry name" value="AceGlu_kinase-like_sf"/>
</dbReference>
<dbReference type="InterPro" id="IPR001048">
    <property type="entry name" value="Asp/Glu/Uridylate_kinase"/>
</dbReference>
<dbReference type="InterPro" id="IPR003964">
    <property type="entry name" value="Carb_kinase"/>
</dbReference>
<dbReference type="NCBIfam" id="TIGR00746">
    <property type="entry name" value="arcC"/>
    <property type="match status" value="1"/>
</dbReference>
<dbReference type="NCBIfam" id="NF006926">
    <property type="entry name" value="PRK09411.1"/>
    <property type="match status" value="1"/>
</dbReference>
<dbReference type="NCBIfam" id="NF009008">
    <property type="entry name" value="PRK12354.1"/>
    <property type="match status" value="1"/>
</dbReference>
<dbReference type="PANTHER" id="PTHR30409">
    <property type="entry name" value="CARBAMATE KINASE"/>
    <property type="match status" value="1"/>
</dbReference>
<dbReference type="PANTHER" id="PTHR30409:SF1">
    <property type="entry name" value="CARBAMATE KINASE-RELATED"/>
    <property type="match status" value="1"/>
</dbReference>
<dbReference type="Pfam" id="PF00696">
    <property type="entry name" value="AA_kinase"/>
    <property type="match status" value="1"/>
</dbReference>
<dbReference type="PIRSF" id="PIRSF000723">
    <property type="entry name" value="Carbamate_kin"/>
    <property type="match status" value="1"/>
</dbReference>
<dbReference type="PRINTS" id="PR01469">
    <property type="entry name" value="CARBMTKINASE"/>
</dbReference>
<dbReference type="SUPFAM" id="SSF53633">
    <property type="entry name" value="Carbamate kinase-like"/>
    <property type="match status" value="1"/>
</dbReference>
<keyword id="KW-0067">ATP-binding</keyword>
<keyword id="KW-0963">Cytoplasm</keyword>
<keyword id="KW-0418">Kinase</keyword>
<keyword id="KW-0547">Nucleotide-binding</keyword>
<keyword id="KW-1185">Reference proteome</keyword>
<keyword id="KW-0808">Transferase</keyword>
<organism>
    <name type="scientific">Escherichia coli O6:H1 (strain CFT073 / ATCC 700928 / UPEC)</name>
    <dbReference type="NCBI Taxonomy" id="199310"/>
    <lineage>
        <taxon>Bacteria</taxon>
        <taxon>Pseudomonadati</taxon>
        <taxon>Pseudomonadota</taxon>
        <taxon>Gammaproteobacteria</taxon>
        <taxon>Enterobacterales</taxon>
        <taxon>Enterobacteriaceae</taxon>
        <taxon>Escherichia</taxon>
    </lineage>
</organism>
<accession>Q8FK51</accession>
<reference key="1">
    <citation type="journal article" date="2002" name="Proc. Natl. Acad. Sci. U.S.A.">
        <title>Extensive mosaic structure revealed by the complete genome sequence of uropathogenic Escherichia coli.</title>
        <authorList>
            <person name="Welch R.A."/>
            <person name="Burland V."/>
            <person name="Plunkett G. III"/>
            <person name="Redford P."/>
            <person name="Roesch P."/>
            <person name="Rasko D."/>
            <person name="Buckles E.L."/>
            <person name="Liou S.-R."/>
            <person name="Boutin A."/>
            <person name="Hackett J."/>
            <person name="Stroud D."/>
            <person name="Mayhew G.F."/>
            <person name="Rose D.J."/>
            <person name="Zhou S."/>
            <person name="Schwartz D.C."/>
            <person name="Perna N.T."/>
            <person name="Mobley H.L.T."/>
            <person name="Donnenberg M.S."/>
            <person name="Blattner F.R."/>
        </authorList>
    </citation>
    <scope>NUCLEOTIDE SEQUENCE [LARGE SCALE GENOMIC DNA]</scope>
    <source>
        <strain>CFT073 / ATCC 700928 / UPEC</strain>
    </source>
</reference>
<protein>
    <recommendedName>
        <fullName evidence="1">Carbamate kinase</fullName>
        <ecNumber evidence="1">2.7.2.2</ecNumber>
    </recommendedName>
    <alternativeName>
        <fullName evidence="1">Catabolic carbamate kinase</fullName>
        <shortName evidence="1">Catabolic CK</shortName>
    </alternativeName>
</protein>
<evidence type="ECO:0000250" key="1">
    <source>
        <dbReference type="UniProtKB" id="P37306"/>
    </source>
</evidence>
<evidence type="ECO:0000305" key="2"/>
<sequence length="297" mass="31742">MKTLVVALGGNALLQRGEALTAENQYRNIASAVPALARLARSYRLAIVHGNGPQVGLLALQNLAWKEVEPYPLDVLVAESQGMIGYMLAQSLSAQPQMPHVTTVLTRIEVSPDDPAFLQPEKFIGPVYQPEEQEALEATYGWQMKRDGKYLRRVVASPQPRKILDSEAIELLLKEGHVVICSGGGGVPVTEDGAGSEAVIDKDLAAALLAEQINADGLVILTDADAVYENWGTPQQRAIRHATPDELAPFAKADGSMGPKVTAVSGYVRSRGKPAWIGALSRIEETLAGEAGTCISL</sequence>
<comment type="function">
    <text evidence="1">Kinase involved in the anaerobic nitrogen utilization via the assimilation of allantoin. Catalyzes the transfer of a phosphate group from carbamoyl phosphate to ADP to produce ATP and leave carbamate, which spontaneously hydrolyzes to ammonia and hydrogencarbonate.</text>
</comment>
<comment type="catalytic activity">
    <reaction evidence="1">
        <text>hydrogencarbonate + NH4(+) + ATP = carbamoyl phosphate + ADP + H2O + H(+)</text>
        <dbReference type="Rhea" id="RHEA:10152"/>
        <dbReference type="ChEBI" id="CHEBI:15377"/>
        <dbReference type="ChEBI" id="CHEBI:15378"/>
        <dbReference type="ChEBI" id="CHEBI:17544"/>
        <dbReference type="ChEBI" id="CHEBI:28938"/>
        <dbReference type="ChEBI" id="CHEBI:30616"/>
        <dbReference type="ChEBI" id="CHEBI:58228"/>
        <dbReference type="ChEBI" id="CHEBI:456216"/>
        <dbReference type="EC" id="2.7.2.2"/>
    </reaction>
    <physiologicalReaction direction="right-to-left" evidence="1">
        <dbReference type="Rhea" id="RHEA:10154"/>
    </physiologicalReaction>
</comment>
<comment type="catalytic activity">
    <reaction evidence="1">
        <text>carbamate + ATP = carbamoyl phosphate + ADP</text>
        <dbReference type="Rhea" id="RHEA:30755"/>
        <dbReference type="ChEBI" id="CHEBI:13941"/>
        <dbReference type="ChEBI" id="CHEBI:30616"/>
        <dbReference type="ChEBI" id="CHEBI:58228"/>
        <dbReference type="ChEBI" id="CHEBI:456216"/>
    </reaction>
    <physiologicalReaction direction="right-to-left" evidence="1">
        <dbReference type="Rhea" id="RHEA:30757"/>
    </physiologicalReaction>
</comment>
<comment type="catalytic activity">
    <reaction evidence="1">
        <text>hydrogencarbonate + NH4(+) = carbamate + H2O + H(+)</text>
        <dbReference type="Rhea" id="RHEA:57716"/>
        <dbReference type="ChEBI" id="CHEBI:13941"/>
        <dbReference type="ChEBI" id="CHEBI:15377"/>
        <dbReference type="ChEBI" id="CHEBI:15378"/>
        <dbReference type="ChEBI" id="CHEBI:17544"/>
        <dbReference type="ChEBI" id="CHEBI:28938"/>
    </reaction>
    <physiologicalReaction direction="right-to-left" evidence="1">
        <dbReference type="Rhea" id="RHEA:57718"/>
    </physiologicalReaction>
</comment>
<comment type="pathway">
    <text evidence="1">Nitrogen metabolism; (S)-allantoin degradation.</text>
</comment>
<comment type="subcellular location">
    <subcellularLocation>
        <location evidence="1">Cytoplasm</location>
    </subcellularLocation>
</comment>
<comment type="similarity">
    <text evidence="2">Belongs to the carbamate kinase family.</text>
</comment>
<gene>
    <name evidence="1" type="primary">allK</name>
    <name type="synonym">arcC</name>
    <name type="ordered locus">c0635</name>
</gene>
<feature type="chain" id="PRO_0000185120" description="Carbamate kinase">
    <location>
        <begin position="1"/>
        <end position="297"/>
    </location>
</feature>
<proteinExistence type="inferred from homology"/>
<name>ALLK_ECOL6</name>